<feature type="chain" id="PRO_0000268201" description="TATA-box-binding protein">
    <location>
        <begin position="1"/>
        <end position="326"/>
    </location>
</feature>
<feature type="repeat" description="1">
    <location>
        <begin position="152"/>
        <end position="228"/>
    </location>
</feature>
<feature type="repeat" description="2">
    <location>
        <begin position="242"/>
        <end position="319"/>
    </location>
</feature>
<feature type="region of interest" description="Disordered" evidence="3">
    <location>
        <begin position="1"/>
        <end position="21"/>
    </location>
</feature>
<feature type="region of interest" description="Disordered" evidence="3">
    <location>
        <begin position="114"/>
        <end position="146"/>
    </location>
</feature>
<feature type="compositionally biased region" description="Low complexity" evidence="3">
    <location>
        <begin position="114"/>
        <end position="125"/>
    </location>
</feature>
<feature type="binding site" evidence="1">
    <location>
        <position position="154"/>
    </location>
    <ligand>
        <name>DNA</name>
        <dbReference type="ChEBI" id="CHEBI:16991"/>
    </ligand>
</feature>
<feature type="binding site" evidence="1">
    <location>
        <position position="190"/>
    </location>
    <ligand>
        <name>DNA</name>
        <dbReference type="ChEBI" id="CHEBI:16991"/>
    </ligand>
</feature>
<feature type="binding site" evidence="1">
    <location>
        <position position="205"/>
    </location>
    <ligand>
        <name>DNA</name>
        <dbReference type="ChEBI" id="CHEBI:16991"/>
    </ligand>
</feature>
<feature type="binding site" evidence="1">
    <location>
        <position position="244"/>
    </location>
    <ligand>
        <name>DNA</name>
        <dbReference type="ChEBI" id="CHEBI:16991"/>
    </ligand>
</feature>
<feature type="binding site" evidence="1">
    <location>
        <position position="281"/>
    </location>
    <ligand>
        <name>DNA</name>
        <dbReference type="ChEBI" id="CHEBI:16991"/>
    </ligand>
</feature>
<evidence type="ECO:0000250" key="1">
    <source>
        <dbReference type="UniProtKB" id="P20226"/>
    </source>
</evidence>
<evidence type="ECO:0000250" key="2">
    <source>
        <dbReference type="UniProtKB" id="P29037"/>
    </source>
</evidence>
<evidence type="ECO:0000256" key="3">
    <source>
        <dbReference type="SAM" id="MobiDB-lite"/>
    </source>
</evidence>
<evidence type="ECO:0000305" key="4"/>
<reference key="1">
    <citation type="submission" date="2005-06" db="EMBL/GenBank/DDBJ databases">
        <title>DNA sequences of macaque genes expressed in brain or testis and its evolutionary implications.</title>
        <authorList>
            <consortium name="International consortium for macaque cDNA sequencing and analysis"/>
        </authorList>
    </citation>
    <scope>NUCLEOTIDE SEQUENCE [LARGE SCALE MRNA]</scope>
    <source>
        <tissue>Testis</tissue>
    </source>
</reference>
<keyword id="KW-0238">DNA-binding</keyword>
<keyword id="KW-0539">Nucleus</keyword>
<keyword id="KW-1185">Reference proteome</keyword>
<keyword id="KW-0677">Repeat</keyword>
<keyword id="KW-0804">Transcription</keyword>
<comment type="function">
    <text evidence="1">General transcription factor that functions at the core of the DNA-binding multiprotein factor TFIID. Binding of TFIID to the TATA box is the initial transcriptional step of the pre-initiation complex (PIC), playing a role in the activation of eukaryotic genes transcribed by RNA polymerase II. Component of a BRF2-containing transcription factor complex that regulates transcription mediated by RNA polymerase III. Component of the transcription factor SL1/TIF-IB complex, which is involved in the assembly of the PIC (pre-initiation complex) during RNA polymerase I-dependent transcription. The rate of PIC formation probably is primarily dependent on the rate of association of SL1 with the rDNA promoter. SL1 is involved in stabilization of nucleolar transcription factor 1/UBTF on rDNA.</text>
</comment>
<comment type="subunit">
    <text evidence="1 2">Binds DNA as monomer. Belongs to the TFIID complex together with the TBP-associated factors (TAFs). Part of a TFIID-containing RNA polymerase II pre-initiation complex that is composed of TBP and at least GTF2A1, GTF2A2, GTF2E1, GTF2E2, GTF2F1, GTF2H2, GTF2H3, GTF2H4, GTF2H5, GTF2B, TCEA1, ERCC2, ERCC3, TAF1, TAF2, TAF3, TAF4, TAF5, TAF6, TAF7, TAF8, TAF9, TAF10, TAF11, TAF12 and TAF13. Component of the transcription factor SL1/TIF-IB complex, composed of TBP and at least TAF1A, TAF1B, TAF1C and TAF1D. Association of TBP to form either TFIID or SL1/TIF-IB appears to be mutually exclusive. Interacts with TAF1A, TAF1B and TAF1C. Interacts with TFIIB, NCOA6, DRAP1, DR1 and ELF3. Interacts with SPIB, SNAPC1, SNAPC2 and SNAPC4. Interacts with UTF1. Interacts with BRF2; this interaction promotes recruitment of BRF2 to TATA box-containing promoters. Interacts with UBTF. Interacts with GPBP1. Interacts with CITED2. Interacts with ATF7IP. Interacts with LLPH. Interacts with HSF1 (via transactivation domain). Interacts with GTF2B (via C-terminus); this interaction with promoter-bound TBP guides RNA polymerase II into the pre-initiation complex (PIC). Interacts with PAX5 (By similarity). Interacts with MSX1; the interaction may inhibit MSX1 autoinactivation (By similarity).</text>
</comment>
<comment type="subcellular location">
    <subcellularLocation>
        <location evidence="1">Nucleus</location>
    </subcellularLocation>
</comment>
<comment type="similarity">
    <text evidence="4">Belongs to the TBP family.</text>
</comment>
<dbReference type="EMBL" id="AB168365">
    <property type="protein sequence ID" value="BAE00488.1"/>
    <property type="molecule type" value="mRNA"/>
</dbReference>
<dbReference type="EMBL" id="AB178959">
    <property type="protein sequence ID" value="BAE02010.1"/>
    <property type="molecule type" value="mRNA"/>
</dbReference>
<dbReference type="RefSeq" id="NP_001271912.1">
    <property type="nucleotide sequence ID" value="NM_001284983.1"/>
</dbReference>
<dbReference type="RefSeq" id="XP_005551415.1">
    <property type="nucleotide sequence ID" value="XM_005551358.2"/>
</dbReference>
<dbReference type="RefSeq" id="XP_005551417.1">
    <property type="nucleotide sequence ID" value="XM_005551360.2"/>
</dbReference>
<dbReference type="RefSeq" id="XP_005551418.1">
    <property type="nucleotide sequence ID" value="XM_005551361.4"/>
</dbReference>
<dbReference type="RefSeq" id="XP_005551419.1">
    <property type="nucleotide sequence ID" value="XM_005551362.2"/>
</dbReference>
<dbReference type="RefSeq" id="XP_005551420.1">
    <property type="nucleotide sequence ID" value="XM_005551363.2"/>
</dbReference>
<dbReference type="RefSeq" id="XP_005551421.1">
    <property type="nucleotide sequence ID" value="XM_005551364.2"/>
</dbReference>
<dbReference type="RefSeq" id="XP_015303863.1">
    <property type="nucleotide sequence ID" value="XM_015448377.1"/>
</dbReference>
<dbReference type="RefSeq" id="XP_015303864.1">
    <property type="nucleotide sequence ID" value="XM_015448378.1"/>
</dbReference>
<dbReference type="RefSeq" id="XP_045247718.1">
    <property type="nucleotide sequence ID" value="XM_045391783.2"/>
</dbReference>
<dbReference type="RefSeq" id="XP_045247720.1">
    <property type="nucleotide sequence ID" value="XM_045391785.2"/>
</dbReference>
<dbReference type="RefSeq" id="XP_045247721.1">
    <property type="nucleotide sequence ID" value="XM_045391786.2"/>
</dbReference>
<dbReference type="SMR" id="Q4R4F5"/>
<dbReference type="STRING" id="9541.ENSMFAP00000015908"/>
<dbReference type="Ensembl" id="ENSMFAT00000066438.2">
    <property type="protein sequence ID" value="ENSMFAP00000015908.1"/>
    <property type="gene ID" value="ENSMFAG00000031133.2"/>
</dbReference>
<dbReference type="GeneID" id="101866697"/>
<dbReference type="CTD" id="6908"/>
<dbReference type="VEuPathDB" id="HostDB:ENSMFAG00000031133"/>
<dbReference type="eggNOG" id="KOG3302">
    <property type="taxonomic scope" value="Eukaryota"/>
</dbReference>
<dbReference type="GeneTree" id="ENSGT00940000157474"/>
<dbReference type="Proteomes" id="UP000233100">
    <property type="component" value="Chromosome 4"/>
</dbReference>
<dbReference type="Bgee" id="ENSMFAG00000031133">
    <property type="expression patterns" value="Expressed in multicellular organism and 14 other cell types or tissues"/>
</dbReference>
<dbReference type="GO" id="GO:0005829">
    <property type="term" value="C:cytosol"/>
    <property type="evidence" value="ECO:0007669"/>
    <property type="project" value="Ensembl"/>
</dbReference>
<dbReference type="GO" id="GO:0000791">
    <property type="term" value="C:euchromatin"/>
    <property type="evidence" value="ECO:0007669"/>
    <property type="project" value="Ensembl"/>
</dbReference>
<dbReference type="GO" id="GO:0001674">
    <property type="term" value="C:female germ cell nucleus"/>
    <property type="evidence" value="ECO:0007669"/>
    <property type="project" value="Ensembl"/>
</dbReference>
<dbReference type="GO" id="GO:0001939">
    <property type="term" value="C:female pronucleus"/>
    <property type="evidence" value="ECO:0007669"/>
    <property type="project" value="Ensembl"/>
</dbReference>
<dbReference type="GO" id="GO:0001673">
    <property type="term" value="C:male germ cell nucleus"/>
    <property type="evidence" value="ECO:0007669"/>
    <property type="project" value="Ensembl"/>
</dbReference>
<dbReference type="GO" id="GO:0001940">
    <property type="term" value="C:male pronucleus"/>
    <property type="evidence" value="ECO:0007669"/>
    <property type="project" value="Ensembl"/>
</dbReference>
<dbReference type="GO" id="GO:0005634">
    <property type="term" value="C:nucleus"/>
    <property type="evidence" value="ECO:0000250"/>
    <property type="project" value="UniProtKB"/>
</dbReference>
<dbReference type="GO" id="GO:0005668">
    <property type="term" value="C:RNA polymerase transcription factor SL1 complex"/>
    <property type="evidence" value="ECO:0007669"/>
    <property type="project" value="Ensembl"/>
</dbReference>
<dbReference type="GO" id="GO:0005672">
    <property type="term" value="C:transcription factor TFIIA complex"/>
    <property type="evidence" value="ECO:0007669"/>
    <property type="project" value="Ensembl"/>
</dbReference>
<dbReference type="GO" id="GO:0005669">
    <property type="term" value="C:transcription factor TFIID complex"/>
    <property type="evidence" value="ECO:0000250"/>
    <property type="project" value="UniProtKB"/>
</dbReference>
<dbReference type="GO" id="GO:0017162">
    <property type="term" value="F:aryl hydrocarbon receptor binding"/>
    <property type="evidence" value="ECO:0007669"/>
    <property type="project" value="Ensembl"/>
</dbReference>
<dbReference type="GO" id="GO:0019899">
    <property type="term" value="F:enzyme binding"/>
    <property type="evidence" value="ECO:0007669"/>
    <property type="project" value="Ensembl"/>
</dbReference>
<dbReference type="GO" id="GO:0001164">
    <property type="term" value="F:RNA polymerase I core promoter sequence-specific DNA binding"/>
    <property type="evidence" value="ECO:0000250"/>
    <property type="project" value="UniProtKB"/>
</dbReference>
<dbReference type="GO" id="GO:0000978">
    <property type="term" value="F:RNA polymerase II cis-regulatory region sequence-specific DNA binding"/>
    <property type="evidence" value="ECO:0007669"/>
    <property type="project" value="Ensembl"/>
</dbReference>
<dbReference type="GO" id="GO:0000979">
    <property type="term" value="F:RNA polymerase II core promoter sequence-specific DNA binding"/>
    <property type="evidence" value="ECO:0007669"/>
    <property type="project" value="Ensembl"/>
</dbReference>
<dbReference type="GO" id="GO:0016251">
    <property type="term" value="F:RNA polymerase II general transcription initiation factor activity"/>
    <property type="evidence" value="ECO:0007669"/>
    <property type="project" value="Ensembl"/>
</dbReference>
<dbReference type="GO" id="GO:0000995">
    <property type="term" value="F:RNA polymerase III general transcription initiation factor activity"/>
    <property type="evidence" value="ECO:0000250"/>
    <property type="project" value="UniProtKB"/>
</dbReference>
<dbReference type="GO" id="GO:0001093">
    <property type="term" value="F:TFIIB-class transcription factor binding"/>
    <property type="evidence" value="ECO:0007669"/>
    <property type="project" value="Ensembl"/>
</dbReference>
<dbReference type="GO" id="GO:0042789">
    <property type="term" value="P:mRNA transcription by RNA polymerase II"/>
    <property type="evidence" value="ECO:0007669"/>
    <property type="project" value="Ensembl"/>
</dbReference>
<dbReference type="GO" id="GO:0060261">
    <property type="term" value="P:positive regulation of transcription initiation by RNA polymerase II"/>
    <property type="evidence" value="ECO:0007669"/>
    <property type="project" value="Ensembl"/>
</dbReference>
<dbReference type="GO" id="GO:0051123">
    <property type="term" value="P:RNA polymerase II preinitiation complex assembly"/>
    <property type="evidence" value="ECO:0007669"/>
    <property type="project" value="Ensembl"/>
</dbReference>
<dbReference type="GO" id="GO:0006366">
    <property type="term" value="P:transcription by RNA polymerase II"/>
    <property type="evidence" value="ECO:0000250"/>
    <property type="project" value="UniProtKB"/>
</dbReference>
<dbReference type="GO" id="GO:0006383">
    <property type="term" value="P:transcription by RNA polymerase III"/>
    <property type="evidence" value="ECO:0000250"/>
    <property type="project" value="UniProtKB"/>
</dbReference>
<dbReference type="CDD" id="cd04516">
    <property type="entry name" value="TBP_eukaryotes"/>
    <property type="match status" value="1"/>
</dbReference>
<dbReference type="FunFam" id="3.30.310.10:FF:000001">
    <property type="entry name" value="TATA-box-binding protein 2"/>
    <property type="match status" value="1"/>
</dbReference>
<dbReference type="FunFam" id="3.30.310.10:FF:000002">
    <property type="entry name" value="TATA-box-binding protein 2"/>
    <property type="match status" value="1"/>
</dbReference>
<dbReference type="Gene3D" id="3.30.310.10">
    <property type="entry name" value="TATA-Binding Protein"/>
    <property type="match status" value="2"/>
</dbReference>
<dbReference type="HAMAP" id="MF_00408">
    <property type="entry name" value="TATA_bind_prot_arch"/>
    <property type="match status" value="1"/>
</dbReference>
<dbReference type="InterPro" id="IPR000814">
    <property type="entry name" value="TBP"/>
</dbReference>
<dbReference type="InterPro" id="IPR030491">
    <property type="entry name" value="TBP_CS"/>
</dbReference>
<dbReference type="InterPro" id="IPR012295">
    <property type="entry name" value="TBP_dom_sf"/>
</dbReference>
<dbReference type="InterPro" id="IPR033710">
    <property type="entry name" value="TBP_eukaryotic"/>
</dbReference>
<dbReference type="PANTHER" id="PTHR10126">
    <property type="entry name" value="TATA-BOX BINDING PROTEIN"/>
    <property type="match status" value="1"/>
</dbReference>
<dbReference type="Pfam" id="PF00352">
    <property type="entry name" value="TBP"/>
    <property type="match status" value="2"/>
</dbReference>
<dbReference type="PRINTS" id="PR00686">
    <property type="entry name" value="TIFACTORIID"/>
</dbReference>
<dbReference type="SUPFAM" id="SSF55945">
    <property type="entry name" value="TATA-box binding protein-like"/>
    <property type="match status" value="2"/>
</dbReference>
<dbReference type="PROSITE" id="PS00351">
    <property type="entry name" value="TFIID"/>
    <property type="match status" value="2"/>
</dbReference>
<protein>
    <recommendedName>
        <fullName>TATA-box-binding protein</fullName>
    </recommendedName>
    <alternativeName>
        <fullName>TATA sequence-binding protein</fullName>
    </alternativeName>
    <alternativeName>
        <fullName>TATA-binding factor</fullName>
    </alternativeName>
    <alternativeName>
        <fullName>TATA-box factor</fullName>
    </alternativeName>
    <alternativeName>
        <fullName>Transcription initiation factor TFIID TBP subunit</fullName>
    </alternativeName>
</protein>
<gene>
    <name type="primary">TBP</name>
    <name type="ORF">QtsA-10091</name>
    <name type="ORF">QtsA-11515</name>
</gene>
<accession>Q4R4F5</accession>
<organism>
    <name type="scientific">Macaca fascicularis</name>
    <name type="common">Crab-eating macaque</name>
    <name type="synonym">Cynomolgus monkey</name>
    <dbReference type="NCBI Taxonomy" id="9541"/>
    <lineage>
        <taxon>Eukaryota</taxon>
        <taxon>Metazoa</taxon>
        <taxon>Chordata</taxon>
        <taxon>Craniata</taxon>
        <taxon>Vertebrata</taxon>
        <taxon>Euteleostomi</taxon>
        <taxon>Mammalia</taxon>
        <taxon>Eutheria</taxon>
        <taxon>Euarchontoglires</taxon>
        <taxon>Primates</taxon>
        <taxon>Haplorrhini</taxon>
        <taxon>Catarrhini</taxon>
        <taxon>Cercopithecidae</taxon>
        <taxon>Cercopithecinae</taxon>
        <taxon>Macaca</taxon>
    </lineage>
</organism>
<name>TBP_MACFA</name>
<proteinExistence type="evidence at transcript level"/>
<sequence>MDQNNSLPPYAQGLASPQGAMTPGIPIFSPMMPYGTGLTPQPIQNTNSLSILEEQQRQQQQQQQQQQQQQQQQQQQQQQQQQAVAAAAVQQSTSQQTTQGTSGQAPQLFHSQTLTTAPLPGTTPLYPSPVTPMTPITPATPASESSGIVPQLQNIVSTVNLGCKLDLKTIALRARNAEYNPKRFAAVIMRIREPRTTALIFSSGKMVCTGAKSEEQSRLAARKYARVVQKLGFPAKFLDFKIQNMVGSCDVKFPIRLEGLVLTHQQFSSYEPELFPGLIYRMIKPRIVLLIFVSGKVVLTGAKVRAEIYEAFENIYPILKGFRKTT</sequence>